<accession>A0AM17</accession>
<organism>
    <name type="scientific">Listeria welshimeri serovar 6b (strain ATCC 35897 / DSM 20650 / CCUG 15529 / CIP 8149 / NCTC 11857 / SLCC 5334 / V8)</name>
    <dbReference type="NCBI Taxonomy" id="386043"/>
    <lineage>
        <taxon>Bacteria</taxon>
        <taxon>Bacillati</taxon>
        <taxon>Bacillota</taxon>
        <taxon>Bacilli</taxon>
        <taxon>Bacillales</taxon>
        <taxon>Listeriaceae</taxon>
        <taxon>Listeria</taxon>
    </lineage>
</organism>
<protein>
    <recommendedName>
        <fullName evidence="1">Potassium-transporting ATPase potassium-binding subunit</fullName>
    </recommendedName>
    <alternativeName>
        <fullName evidence="1">ATP phosphohydrolase [potassium-transporting] A chain</fullName>
    </alternativeName>
    <alternativeName>
        <fullName evidence="1">Potassium-binding and translocating subunit A</fullName>
    </alternativeName>
    <alternativeName>
        <fullName evidence="1">Potassium-translocating ATPase A chain</fullName>
    </alternativeName>
</protein>
<comment type="function">
    <text evidence="1">Part of the high-affinity ATP-driven potassium transport (or Kdp) system, which catalyzes the hydrolysis of ATP coupled with the electrogenic transport of potassium into the cytoplasm. This subunit binds the extracellular potassium ions and delivers the ions to the membrane domain of KdpB through an intramembrane tunnel.</text>
</comment>
<comment type="subunit">
    <text evidence="1">The system is composed of three essential subunits: KdpA, KdpB and KdpC.</text>
</comment>
<comment type="subcellular location">
    <subcellularLocation>
        <location evidence="1">Cell membrane</location>
        <topology evidence="1">Multi-pass membrane protein</topology>
    </subcellularLocation>
</comment>
<comment type="similarity">
    <text evidence="1">Belongs to the KdpA family.</text>
</comment>
<gene>
    <name evidence="1" type="primary">kdpA</name>
    <name type="ordered locus">lwe2631</name>
</gene>
<name>KDPA_LISW6</name>
<feature type="chain" id="PRO_1000022228" description="Potassium-transporting ATPase potassium-binding subunit">
    <location>
        <begin position="1"/>
        <end position="561"/>
    </location>
</feature>
<feature type="transmembrane region" description="Helical" evidence="1">
    <location>
        <begin position="4"/>
        <end position="24"/>
    </location>
</feature>
<feature type="transmembrane region" description="Helical" evidence="1">
    <location>
        <begin position="65"/>
        <end position="85"/>
    </location>
</feature>
<feature type="transmembrane region" description="Helical" evidence="1">
    <location>
        <begin position="134"/>
        <end position="154"/>
    </location>
</feature>
<feature type="transmembrane region" description="Helical" evidence="1">
    <location>
        <begin position="177"/>
        <end position="197"/>
    </location>
</feature>
<feature type="transmembrane region" description="Helical" evidence="1">
    <location>
        <begin position="253"/>
        <end position="273"/>
    </location>
</feature>
<feature type="transmembrane region" description="Helical" evidence="1">
    <location>
        <begin position="285"/>
        <end position="305"/>
    </location>
</feature>
<feature type="transmembrane region" description="Helical" evidence="1">
    <location>
        <begin position="380"/>
        <end position="400"/>
    </location>
</feature>
<feature type="transmembrane region" description="Helical" evidence="1">
    <location>
        <begin position="417"/>
        <end position="437"/>
    </location>
</feature>
<feature type="transmembrane region" description="Helical" evidence="1">
    <location>
        <begin position="484"/>
        <end position="504"/>
    </location>
</feature>
<feature type="transmembrane region" description="Helical" evidence="1">
    <location>
        <begin position="528"/>
        <end position="548"/>
    </location>
</feature>
<evidence type="ECO:0000255" key="1">
    <source>
        <dbReference type="HAMAP-Rule" id="MF_00275"/>
    </source>
</evidence>
<keyword id="KW-1003">Cell membrane</keyword>
<keyword id="KW-0406">Ion transport</keyword>
<keyword id="KW-0472">Membrane</keyword>
<keyword id="KW-0630">Potassium</keyword>
<keyword id="KW-0633">Potassium transport</keyword>
<keyword id="KW-0812">Transmembrane</keyword>
<keyword id="KW-1133">Transmembrane helix</keyword>
<keyword id="KW-0813">Transport</keyword>
<reference key="1">
    <citation type="journal article" date="2006" name="J. Bacteriol.">
        <title>Whole-genome sequence of Listeria welshimeri reveals common steps in genome reduction with Listeria innocua as compared to Listeria monocytogenes.</title>
        <authorList>
            <person name="Hain T."/>
            <person name="Steinweg C."/>
            <person name="Kuenne C.T."/>
            <person name="Billion A."/>
            <person name="Ghai R."/>
            <person name="Chatterjee S.S."/>
            <person name="Domann E."/>
            <person name="Kaerst U."/>
            <person name="Goesmann A."/>
            <person name="Bekel T."/>
            <person name="Bartels D."/>
            <person name="Kaiser O."/>
            <person name="Meyer F."/>
            <person name="Puehler A."/>
            <person name="Weisshaar B."/>
            <person name="Wehland J."/>
            <person name="Liang C."/>
            <person name="Dandekar T."/>
            <person name="Lampidis R."/>
            <person name="Kreft J."/>
            <person name="Goebel W."/>
            <person name="Chakraborty T."/>
        </authorList>
    </citation>
    <scope>NUCLEOTIDE SEQUENCE [LARGE SCALE GENOMIC DNA]</scope>
    <source>
        <strain>ATCC 35897 / DSM 20650 / CCUG 15529 / CIP 8149 / NCTC 11857 / SLCC 5334 / V8</strain>
    </source>
</reference>
<proteinExistence type="inferred from homology"/>
<sequence>MKYIIMQDVFFIVLLLVLAIPLGIYMYKVMIGERVFLSRVLEPVERFGYRLMGVSEAGMSAKRYAGSVLAFSAIGFVFVMAVLMLQGFLPLNPQGMKGLSFSLAFNTAASFVSNTNWQAYSGESTLSYFSQSVGLTVQNFVSAATGIAVLFAVIRGFIWKKQKTVGNFWQDLFRVTLYILLPLSLVLAILLVSQGVVQSFADYSVVETLENGAKQLIPLGPAASQIAIKQLGTNGGGFFGANSAFPFENPSSFTNLIEMLAILLIPVALVVMFGRAVKDSKQGRAIMTAMMIVFVVGIVAITISEQFAGPSYQGVATSGSMEGKEVRFGVGGSSLFAASTTAASNGAVNAMHDSLTPLGGLVPMFFMQLGEVIFGGVGSGLYGMIGFIILTVFIAGLLVGRTPEYLGKKIEPYDMKMVCLLILVPPLLTLFGTAFAVMMPSVQASVAASGAHGFSEVLYAFTSMGNNNGSAFAGFAADTTFTNMVGALMMLFARFIPLIAALYLAQNMAGKSPVAASSGTLSTKNGMFIGLLIGVVVLVGALSFLPALALGPIADFFTTFK</sequence>
<dbReference type="EMBL" id="AM263198">
    <property type="protein sequence ID" value="CAK22049.1"/>
    <property type="molecule type" value="Genomic_DNA"/>
</dbReference>
<dbReference type="RefSeq" id="WP_011703327.1">
    <property type="nucleotide sequence ID" value="NC_008555.1"/>
</dbReference>
<dbReference type="SMR" id="A0AM17"/>
<dbReference type="STRING" id="386043.lwe2631"/>
<dbReference type="GeneID" id="61190555"/>
<dbReference type="KEGG" id="lwe:lwe2631"/>
<dbReference type="eggNOG" id="COG2060">
    <property type="taxonomic scope" value="Bacteria"/>
</dbReference>
<dbReference type="HOGENOM" id="CLU_018614_3_0_9"/>
<dbReference type="OrthoDB" id="9763796at2"/>
<dbReference type="Proteomes" id="UP000000779">
    <property type="component" value="Chromosome"/>
</dbReference>
<dbReference type="GO" id="GO:0005886">
    <property type="term" value="C:plasma membrane"/>
    <property type="evidence" value="ECO:0007669"/>
    <property type="project" value="UniProtKB-SubCell"/>
</dbReference>
<dbReference type="GO" id="GO:0008556">
    <property type="term" value="F:P-type potassium transmembrane transporter activity"/>
    <property type="evidence" value="ECO:0007669"/>
    <property type="project" value="InterPro"/>
</dbReference>
<dbReference type="GO" id="GO:0030955">
    <property type="term" value="F:potassium ion binding"/>
    <property type="evidence" value="ECO:0007669"/>
    <property type="project" value="UniProtKB-UniRule"/>
</dbReference>
<dbReference type="HAMAP" id="MF_00275">
    <property type="entry name" value="KdpA"/>
    <property type="match status" value="1"/>
</dbReference>
<dbReference type="InterPro" id="IPR004623">
    <property type="entry name" value="KdpA"/>
</dbReference>
<dbReference type="NCBIfam" id="TIGR00680">
    <property type="entry name" value="kdpA"/>
    <property type="match status" value="1"/>
</dbReference>
<dbReference type="PANTHER" id="PTHR30607">
    <property type="entry name" value="POTASSIUM-TRANSPORTING ATPASE A CHAIN"/>
    <property type="match status" value="1"/>
</dbReference>
<dbReference type="PANTHER" id="PTHR30607:SF2">
    <property type="entry name" value="POTASSIUM-TRANSPORTING ATPASE POTASSIUM-BINDING SUBUNIT"/>
    <property type="match status" value="1"/>
</dbReference>
<dbReference type="Pfam" id="PF03814">
    <property type="entry name" value="KdpA"/>
    <property type="match status" value="1"/>
</dbReference>
<dbReference type="PIRSF" id="PIRSF001294">
    <property type="entry name" value="K_ATPaseA"/>
    <property type="match status" value="1"/>
</dbReference>